<protein>
    <recommendedName>
        <fullName evidence="1">Putative manganese efflux pump MntP</fullName>
    </recommendedName>
</protein>
<feature type="chain" id="PRO_1000068632" description="Putative manganese efflux pump MntP">
    <location>
        <begin position="1"/>
        <end position="188"/>
    </location>
</feature>
<feature type="transmembrane region" description="Helical" evidence="1">
    <location>
        <begin position="3"/>
        <end position="23"/>
    </location>
</feature>
<feature type="transmembrane region" description="Helical" evidence="1">
    <location>
        <begin position="41"/>
        <end position="61"/>
    </location>
</feature>
<feature type="transmembrane region" description="Helical" evidence="1">
    <location>
        <begin position="66"/>
        <end position="86"/>
    </location>
</feature>
<feature type="transmembrane region" description="Helical" evidence="1">
    <location>
        <begin position="107"/>
        <end position="129"/>
    </location>
</feature>
<feature type="transmembrane region" description="Helical" evidence="1">
    <location>
        <begin position="143"/>
        <end position="163"/>
    </location>
</feature>
<feature type="transmembrane region" description="Helical" evidence="1">
    <location>
        <begin position="168"/>
        <end position="188"/>
    </location>
</feature>
<name>MNTP_CITK8</name>
<accession>A8AFN4</accession>
<keyword id="KW-0997">Cell inner membrane</keyword>
<keyword id="KW-1003">Cell membrane</keyword>
<keyword id="KW-0406">Ion transport</keyword>
<keyword id="KW-0464">Manganese</keyword>
<keyword id="KW-0472">Membrane</keyword>
<keyword id="KW-1185">Reference proteome</keyword>
<keyword id="KW-0812">Transmembrane</keyword>
<keyword id="KW-1133">Transmembrane helix</keyword>
<keyword id="KW-0813">Transport</keyword>
<dbReference type="EMBL" id="CP000822">
    <property type="protein sequence ID" value="ABV12297.1"/>
    <property type="molecule type" value="Genomic_DNA"/>
</dbReference>
<dbReference type="RefSeq" id="WP_012132050.1">
    <property type="nucleotide sequence ID" value="NC_009792.1"/>
</dbReference>
<dbReference type="STRING" id="290338.CKO_01156"/>
<dbReference type="GeneID" id="45135292"/>
<dbReference type="KEGG" id="cko:CKO_01156"/>
<dbReference type="HOGENOM" id="CLU_096410_0_0_6"/>
<dbReference type="OrthoDB" id="9811590at2"/>
<dbReference type="Proteomes" id="UP000008148">
    <property type="component" value="Chromosome"/>
</dbReference>
<dbReference type="GO" id="GO:0005886">
    <property type="term" value="C:plasma membrane"/>
    <property type="evidence" value="ECO:0007669"/>
    <property type="project" value="UniProtKB-SubCell"/>
</dbReference>
<dbReference type="GO" id="GO:0005384">
    <property type="term" value="F:manganese ion transmembrane transporter activity"/>
    <property type="evidence" value="ECO:0007669"/>
    <property type="project" value="UniProtKB-UniRule"/>
</dbReference>
<dbReference type="HAMAP" id="MF_01521">
    <property type="entry name" value="MntP_pump"/>
    <property type="match status" value="1"/>
</dbReference>
<dbReference type="InterPro" id="IPR003810">
    <property type="entry name" value="Mntp/YtaF"/>
</dbReference>
<dbReference type="InterPro" id="IPR022929">
    <property type="entry name" value="Put_MntP"/>
</dbReference>
<dbReference type="NCBIfam" id="NF008546">
    <property type="entry name" value="PRK11469.1"/>
    <property type="match status" value="1"/>
</dbReference>
<dbReference type="PANTHER" id="PTHR35529">
    <property type="entry name" value="MANGANESE EFFLUX PUMP MNTP-RELATED"/>
    <property type="match status" value="1"/>
</dbReference>
<dbReference type="PANTHER" id="PTHR35529:SF1">
    <property type="entry name" value="MANGANESE EFFLUX PUMP MNTP-RELATED"/>
    <property type="match status" value="1"/>
</dbReference>
<dbReference type="Pfam" id="PF02659">
    <property type="entry name" value="Mntp"/>
    <property type="match status" value="1"/>
</dbReference>
<proteinExistence type="inferred from homology"/>
<reference key="1">
    <citation type="submission" date="2007-08" db="EMBL/GenBank/DDBJ databases">
        <authorList>
            <consortium name="The Citrobacter koseri Genome Sequencing Project"/>
            <person name="McClelland M."/>
            <person name="Sanderson E.K."/>
            <person name="Porwollik S."/>
            <person name="Spieth J."/>
            <person name="Clifton W.S."/>
            <person name="Latreille P."/>
            <person name="Courtney L."/>
            <person name="Wang C."/>
            <person name="Pepin K."/>
            <person name="Bhonagiri V."/>
            <person name="Nash W."/>
            <person name="Johnson M."/>
            <person name="Thiruvilangam P."/>
            <person name="Wilson R."/>
        </authorList>
    </citation>
    <scope>NUCLEOTIDE SEQUENCE [LARGE SCALE GENOMIC DNA]</scope>
    <source>
        <strain>ATCC BAA-895 / CDC 4225-83 / SGSC4696</strain>
    </source>
</reference>
<organism>
    <name type="scientific">Citrobacter koseri (strain ATCC BAA-895 / CDC 4225-83 / SGSC4696)</name>
    <dbReference type="NCBI Taxonomy" id="290338"/>
    <lineage>
        <taxon>Bacteria</taxon>
        <taxon>Pseudomonadati</taxon>
        <taxon>Pseudomonadota</taxon>
        <taxon>Gammaproteobacteria</taxon>
        <taxon>Enterobacterales</taxon>
        <taxon>Enterobacteriaceae</taxon>
        <taxon>Citrobacter</taxon>
    </lineage>
</organism>
<evidence type="ECO:0000255" key="1">
    <source>
        <dbReference type="HAMAP-Rule" id="MF_01521"/>
    </source>
</evidence>
<sequence length="188" mass="19973">MNITATVLLAFGMSMDAFAASIGKGATLHKPKFSEALRTGLIFGAVETLTPLIGWGLGMLASKFVLEWNHWVAFILLVFLGIRMIIEGVRGGNDEDDEPLRRHSFWLLVTTAIATSLDAMAVGVGLAFLQVNIIATALAIGCATLIMSTLGIMVGRFIGPLLGKRAEILGGAVLIGIGAQILWTHFHG</sequence>
<comment type="function">
    <text evidence="1">Probably functions as a manganese efflux pump.</text>
</comment>
<comment type="subcellular location">
    <subcellularLocation>
        <location evidence="1">Cell inner membrane</location>
        <topology evidence="1">Multi-pass membrane protein</topology>
    </subcellularLocation>
</comment>
<comment type="similarity">
    <text evidence="1">Belongs to the MntP (TC 9.B.29) family.</text>
</comment>
<gene>
    <name evidence="1" type="primary">mntP</name>
    <name type="ordered locus">CKO_01156</name>
</gene>